<organism>
    <name type="scientific">Aspergillus terreus (strain NIH 2624 / FGSC A1156)</name>
    <dbReference type="NCBI Taxonomy" id="341663"/>
    <lineage>
        <taxon>Eukaryota</taxon>
        <taxon>Fungi</taxon>
        <taxon>Dikarya</taxon>
        <taxon>Ascomycota</taxon>
        <taxon>Pezizomycotina</taxon>
        <taxon>Eurotiomycetes</taxon>
        <taxon>Eurotiomycetidae</taxon>
        <taxon>Eurotiales</taxon>
        <taxon>Aspergillaceae</taxon>
        <taxon>Aspergillus</taxon>
        <taxon>Aspergillus subgen. Circumdati</taxon>
    </lineage>
</organism>
<keyword id="KW-0010">Activator</keyword>
<keyword id="KW-0539">Nucleus</keyword>
<keyword id="KW-1185">Reference proteome</keyword>
<keyword id="KW-0804">Transcription</keyword>
<keyword id="KW-0805">Transcription regulation</keyword>
<protein>
    <recommendedName>
        <fullName>Mediator of RNA polymerase II transcription subunit 5</fullName>
    </recommendedName>
    <alternativeName>
        <fullName>Mediator complex subunit 5</fullName>
    </alternativeName>
</protein>
<evidence type="ECO:0000250" key="1"/>
<evidence type="ECO:0000305" key="2"/>
<accession>Q0CL68</accession>
<proteinExistence type="inferred from homology"/>
<feature type="chain" id="PRO_0000302770" description="Mediator of RNA polymerase II transcription subunit 5">
    <location>
        <begin position="1"/>
        <end position="1016"/>
    </location>
</feature>
<gene>
    <name type="primary">nut1</name>
    <name type="synonym">med5</name>
    <name type="ORF">ATEG_05566</name>
</gene>
<comment type="function">
    <text evidence="1">Component of the Mediator complex, a coactivator involved in the regulated transcription of nearly all RNA polymerase II-dependent genes. Mediator functions as a bridge to convey information from gene-specific regulatory proteins to the basal RNA polymerase II transcription machinery. Mediator is recruited to promoters by direct interactions with regulatory proteins and serves as a scaffold for the assembly of a functional preinitiation complex with RNA polymerase II and the general transcription factors (By similarity).</text>
</comment>
<comment type="subunit">
    <text evidence="1">Component of the Mediator complex.</text>
</comment>
<comment type="subcellular location">
    <subcellularLocation>
        <location evidence="1">Nucleus</location>
    </subcellularLocation>
</comment>
<comment type="similarity">
    <text evidence="2">Belongs to the Mediator complex subunit 5 family.</text>
</comment>
<comment type="sequence caution" evidence="2">
    <conflict type="erroneous gene model prediction">
        <sequence resource="EMBL-CDS" id="EAU34635"/>
    </conflict>
</comment>
<dbReference type="EMBL" id="CH476600">
    <property type="protein sequence ID" value="EAU34635.1"/>
    <property type="status" value="ALT_SEQ"/>
    <property type="molecule type" value="Genomic_DNA"/>
</dbReference>
<dbReference type="RefSeq" id="XP_001214744.1">
    <property type="nucleotide sequence ID" value="XM_001214744.1"/>
</dbReference>
<dbReference type="STRING" id="341663.Q0CL68"/>
<dbReference type="GeneID" id="4320977"/>
<dbReference type="eggNOG" id="ENOG502R1HB">
    <property type="taxonomic scope" value="Eukaryota"/>
</dbReference>
<dbReference type="OrthoDB" id="5322661at2759"/>
<dbReference type="Proteomes" id="UP000007963">
    <property type="component" value="Unassembled WGS sequence"/>
</dbReference>
<dbReference type="GO" id="GO:0016592">
    <property type="term" value="C:mediator complex"/>
    <property type="evidence" value="ECO:0007669"/>
    <property type="project" value="InterPro"/>
</dbReference>
<dbReference type="GO" id="GO:0003712">
    <property type="term" value="F:transcription coregulator activity"/>
    <property type="evidence" value="ECO:0007669"/>
    <property type="project" value="InterPro"/>
</dbReference>
<dbReference type="GO" id="GO:0006357">
    <property type="term" value="P:regulation of transcription by RNA polymerase II"/>
    <property type="evidence" value="ECO:0007669"/>
    <property type="project" value="InterPro"/>
</dbReference>
<dbReference type="InterPro" id="IPR014801">
    <property type="entry name" value="Mediator_Med5_fun"/>
</dbReference>
<dbReference type="PANTHER" id="PTHR35784">
    <property type="entry name" value="MEDIATOR OF RNA POLYMERASE II TRANSCRIPTION SUBUNIT 5"/>
    <property type="match status" value="1"/>
</dbReference>
<dbReference type="PANTHER" id="PTHR35784:SF1">
    <property type="entry name" value="MEDIATOR OF RNA POLYMERASE II TRANSCRIPTION SUBUNIT 5"/>
    <property type="match status" value="1"/>
</dbReference>
<dbReference type="Pfam" id="PF08689">
    <property type="entry name" value="Med5"/>
    <property type="match status" value="1"/>
</dbReference>
<sequence>MASTEQWGAFLHQCLAHRIDVADFKNLSRLLFKRNPIAQGALIDVVLETRLAAGIKWDPLLPLYIDGLCKMGKLQISTVLAALLKHSSIHEKPGTDAAAAKQKQKCYTLMTDIRVIQDAMLAVSTGHAPKSLSETAGTFLAIADWIHAVVSWHHGQMNASQQAEGLMSSPDAVSLFESLGILLAAVSGTEKGLQVLSSDSNEGLKVKLGHALSAYLPLCVDLSLPLRNRLDALQKEFNLYGEPPPKNLGVSSLENLHVNGIQFEASIIDGPAINSRAGLYVYINAMLAGRPLVDDSMLLNYLTNRYGAHYDVLIQDLITAAFDVCSNAMYRNESSRTMFLFRSFLVNKLPSFFAAMLSASMVSIPMELCISHALSRLDPNTFPSFSQMFSMQGNTVLSDVRQEFLFACASHKLIPESSIERLLGENPMQALPVGYNKDDLVSQINTTPERAEQLINEIEFTEGNAGPIVGAITEVMQNLCNQKETMTLKNICNSLSRRPQALDVILLFRSPKQVLQPLCALLDSWHWDEDQGESQPVYDEFGSILLLVLVFKYRYDLSAYDLGIANNDSFVLRLLERGSSSQKLDELSESQNKHLGSWIGALFIAEGISEETMSACSPQEFYLLASTLFSQSLAACEAGKLEFETLKGGFEYLLEPFLLPSLVVALTWLGNHIWEAESDPSIPLKALHSLVSPSSISGEAKEIHRTVLNITARSLDEQLKDVRARHPSRTDIKPILDVLEPCLSFPRTGSCHRSELETWTTHAGNLLGSIRSTMQSLVLWCTSPDVNIPPPSYTHRQLVAGIRIVGATRLLAALLDELRLQTDANNGDLALDIAASLVCAPLPESFAVESSPYHPVAVDLAKDPVPRCPLLTLRDALALQHEAVPRTAEKDPARAEAVVRLYRRVAALAAPTAQVPNLDMNNLIQNMQLGVGVDGHDQMGLPAGGAGDAVGDEPNLDQMLDNAAAAAAAGIDSGVGQGMGGDMSGGLDTSIDDVLNAADMAVGNPEFLDLDMEGMF</sequence>
<name>MED5_ASPTN</name>
<reference key="1">
    <citation type="submission" date="2005-09" db="EMBL/GenBank/DDBJ databases">
        <title>Annotation of the Aspergillus terreus NIH2624 genome.</title>
        <authorList>
            <person name="Birren B.W."/>
            <person name="Lander E.S."/>
            <person name="Galagan J.E."/>
            <person name="Nusbaum C."/>
            <person name="Devon K."/>
            <person name="Henn M."/>
            <person name="Ma L.-J."/>
            <person name="Jaffe D.B."/>
            <person name="Butler J."/>
            <person name="Alvarez P."/>
            <person name="Gnerre S."/>
            <person name="Grabherr M."/>
            <person name="Kleber M."/>
            <person name="Mauceli E.W."/>
            <person name="Brockman W."/>
            <person name="Rounsley S."/>
            <person name="Young S.K."/>
            <person name="LaButti K."/>
            <person name="Pushparaj V."/>
            <person name="DeCaprio D."/>
            <person name="Crawford M."/>
            <person name="Koehrsen M."/>
            <person name="Engels R."/>
            <person name="Montgomery P."/>
            <person name="Pearson M."/>
            <person name="Howarth C."/>
            <person name="Larson L."/>
            <person name="Luoma S."/>
            <person name="White J."/>
            <person name="Alvarado L."/>
            <person name="Kodira C.D."/>
            <person name="Zeng Q."/>
            <person name="Oleary S."/>
            <person name="Yandava C."/>
            <person name="Denning D.W."/>
            <person name="Nierman W.C."/>
            <person name="Milne T."/>
            <person name="Madden K."/>
        </authorList>
    </citation>
    <scope>NUCLEOTIDE SEQUENCE [LARGE SCALE GENOMIC DNA]</scope>
    <source>
        <strain>NIH 2624 / FGSC A1156</strain>
    </source>
</reference>